<gene>
    <name evidence="3" type="primary">xilC</name>
    <name type="ORF">Pc16g04870</name>
    <name type="ORF">PCH_Pc16g04870</name>
</gene>
<name>XILC_PENRW</name>
<accession>B6H997</accession>
<sequence>MSRLEIALSSTPEHLLKHLLLGTVLLTSLYALYRRLLPKPLPGIPFNQKSAQSIWGDVLELRDDPSGLAKWCSKQLENHGSPICQALMGPLSKPVVLVADVGNAREMLMGRSDFDRSAYIIDRFPLFGEFHLNMKTGDNWRQSRNWLKDLLAPQYLHNVAGPAIHSSVLKLIELWQHKFHVGDGRVFSMVSDLKTLALDVIVAFHFGSDFQDSALDRQIDHVGKLDGSKLPSGEYNEVEFSKAPLHEFQQGLTDVGDKMAAIYTTKWPPLLVAWWVRYVSPYYRPFFEAKDRFIRKHINLAVRRCRSDEDPSTGIDYMVHREEKAARKARREPVFDKQIMVDEAYGNLIAGQHTTSAALVWILKLLADYPSVQEKLREELQGIFDSAMQENRLPTAAEIIKSKLPYLDAVLEETLRLRAAMLVPRDAAKDTELLGHRIPKGTVVLLVCQGPDYKPSPPSKYWSDVKASRMYPGKGNPDLEIFDPERWLVRNEKGDLEFDGSSYPQLAFGLGIRSCWGRRLAMVEMRIMTTLMILKFELKDVPKGLRGHEASYDISYRAKKGFLHLKSRGEFP</sequence>
<evidence type="ECO:0000250" key="1">
    <source>
        <dbReference type="UniProtKB" id="P04798"/>
    </source>
</evidence>
<evidence type="ECO:0000269" key="2">
    <source>
    </source>
</evidence>
<evidence type="ECO:0000303" key="3">
    <source>
    </source>
</evidence>
<evidence type="ECO:0000305" key="4"/>
<evidence type="ECO:0000305" key="5">
    <source>
    </source>
</evidence>
<keyword id="KW-0349">Heme</keyword>
<keyword id="KW-0408">Iron</keyword>
<keyword id="KW-0479">Metal-binding</keyword>
<keyword id="KW-0503">Monooxygenase</keyword>
<keyword id="KW-0560">Oxidoreductase</keyword>
<keyword id="KW-1185">Reference proteome</keyword>
<organism>
    <name type="scientific">Penicillium rubens (strain ATCC 28089 / DSM 1075 / NRRL 1951 / Wisconsin 54-1255)</name>
    <name type="common">Penicillium chrysogenum</name>
    <dbReference type="NCBI Taxonomy" id="500485"/>
    <lineage>
        <taxon>Eukaryota</taxon>
        <taxon>Fungi</taxon>
        <taxon>Dikarya</taxon>
        <taxon>Ascomycota</taxon>
        <taxon>Pezizomycotina</taxon>
        <taxon>Eurotiomycetes</taxon>
        <taxon>Eurotiomycetidae</taxon>
        <taxon>Eurotiales</taxon>
        <taxon>Aspergillaceae</taxon>
        <taxon>Penicillium</taxon>
        <taxon>Penicillium chrysogenum species complex</taxon>
    </lineage>
</organism>
<comment type="function">
    <text evidence="2 5">Cytochrome P450 monooxygenase; part of the gene cluster that mediates the biosynthesis of the 6-methyl-2-pyrone derivative xylariolide D (PubMed:35628749). XilC hydroxylates the 5-alkyl-6-methyl-2-pyrone backbone called prexylariolide D, produced by the highly reducing polyketide synthase xilA, on its side chain to form xylariolide D (Probable).</text>
</comment>
<comment type="cofactor">
    <cofactor evidence="1">
        <name>heme</name>
        <dbReference type="ChEBI" id="CHEBI:30413"/>
    </cofactor>
</comment>
<comment type="pathway">
    <text evidence="5">Secondary metabolite biosynthesis.</text>
</comment>
<comment type="similarity">
    <text evidence="4">Belongs to the cytochrome P450 family.</text>
</comment>
<reference key="1">
    <citation type="journal article" date="2008" name="Nat. Biotechnol.">
        <title>Genome sequencing and analysis of the filamentous fungus Penicillium chrysogenum.</title>
        <authorList>
            <person name="van den Berg M.A."/>
            <person name="Albang R."/>
            <person name="Albermann K."/>
            <person name="Badger J.H."/>
            <person name="Daran J.-M."/>
            <person name="Driessen A.J.M."/>
            <person name="Garcia-Estrada C."/>
            <person name="Fedorova N.D."/>
            <person name="Harris D.M."/>
            <person name="Heijne W.H.M."/>
            <person name="Joardar V.S."/>
            <person name="Kiel J.A.K.W."/>
            <person name="Kovalchuk A."/>
            <person name="Martin J.F."/>
            <person name="Nierman W.C."/>
            <person name="Nijland J.G."/>
            <person name="Pronk J.T."/>
            <person name="Roubos J.A."/>
            <person name="van der Klei I.J."/>
            <person name="van Peij N.N.M.E."/>
            <person name="Veenhuis M."/>
            <person name="von Doehren H."/>
            <person name="Wagner C."/>
            <person name="Wortman J.R."/>
            <person name="Bovenberg R.A.L."/>
        </authorList>
    </citation>
    <scope>NUCLEOTIDE SEQUENCE [LARGE SCALE GENOMIC DNA]</scope>
    <source>
        <strain>ATCC 28089 / DSM 1075 / NRRL 1951 / Wisconsin 54-1255</strain>
    </source>
</reference>
<reference key="2">
    <citation type="journal article" date="2022" name="J. Fungi">
        <title>Biosynthesis of xylariolide D in Penicillium crustosum implies a chain branching reaction catalyzed by a highly reducing polyketide synthase.</title>
        <authorList>
            <person name="Stierle S.A."/>
            <person name="Li S.M."/>
        </authorList>
    </citation>
    <scope>FUNCTION</scope>
    <scope>CATALYTIC ACTIVITY</scope>
    <scope>PATHWAY</scope>
</reference>
<dbReference type="EC" id="1.-.-.-" evidence="2"/>
<dbReference type="EMBL" id="AM920431">
    <property type="protein sequence ID" value="CAP93157.1"/>
    <property type="molecule type" value="Genomic_DNA"/>
</dbReference>
<dbReference type="RefSeq" id="XP_002560837.1">
    <property type="nucleotide sequence ID" value="XM_002560791.1"/>
</dbReference>
<dbReference type="SMR" id="B6H997"/>
<dbReference type="GeneID" id="8306030"/>
<dbReference type="KEGG" id="pcs:N7525_011161"/>
<dbReference type="VEuPathDB" id="FungiDB:PCH_Pc16g04870"/>
<dbReference type="eggNOG" id="KOG0156">
    <property type="taxonomic scope" value="Eukaryota"/>
</dbReference>
<dbReference type="HOGENOM" id="CLU_025001_1_0_1"/>
<dbReference type="OMA" id="EFRVWCA"/>
<dbReference type="OrthoDB" id="1470350at2759"/>
<dbReference type="BioCyc" id="PCHR:PC16G04870-MONOMER"/>
<dbReference type="Proteomes" id="UP000000724">
    <property type="component" value="Contig Pc00c16"/>
</dbReference>
<dbReference type="GO" id="GO:0020037">
    <property type="term" value="F:heme binding"/>
    <property type="evidence" value="ECO:0007669"/>
    <property type="project" value="InterPro"/>
</dbReference>
<dbReference type="GO" id="GO:0005506">
    <property type="term" value="F:iron ion binding"/>
    <property type="evidence" value="ECO:0007669"/>
    <property type="project" value="InterPro"/>
</dbReference>
<dbReference type="GO" id="GO:0004497">
    <property type="term" value="F:monooxygenase activity"/>
    <property type="evidence" value="ECO:0007669"/>
    <property type="project" value="UniProtKB-KW"/>
</dbReference>
<dbReference type="GO" id="GO:0016705">
    <property type="term" value="F:oxidoreductase activity, acting on paired donors, with incorporation or reduction of molecular oxygen"/>
    <property type="evidence" value="ECO:0007669"/>
    <property type="project" value="InterPro"/>
</dbReference>
<dbReference type="GO" id="GO:0043386">
    <property type="term" value="P:mycotoxin biosynthetic process"/>
    <property type="evidence" value="ECO:0007669"/>
    <property type="project" value="UniProtKB-ARBA"/>
</dbReference>
<dbReference type="Gene3D" id="1.10.630.10">
    <property type="entry name" value="Cytochrome P450"/>
    <property type="match status" value="1"/>
</dbReference>
<dbReference type="InterPro" id="IPR001128">
    <property type="entry name" value="Cyt_P450"/>
</dbReference>
<dbReference type="InterPro" id="IPR002403">
    <property type="entry name" value="Cyt_P450_E_grp-IV"/>
</dbReference>
<dbReference type="InterPro" id="IPR036396">
    <property type="entry name" value="Cyt_P450_sf"/>
</dbReference>
<dbReference type="InterPro" id="IPR050121">
    <property type="entry name" value="Cytochrome_P450_monoxygenase"/>
</dbReference>
<dbReference type="PANTHER" id="PTHR24305">
    <property type="entry name" value="CYTOCHROME P450"/>
    <property type="match status" value="1"/>
</dbReference>
<dbReference type="PANTHER" id="PTHR24305:SF166">
    <property type="entry name" value="CYTOCHROME P450 12A4, MITOCHONDRIAL-RELATED"/>
    <property type="match status" value="1"/>
</dbReference>
<dbReference type="Pfam" id="PF00067">
    <property type="entry name" value="p450"/>
    <property type="match status" value="2"/>
</dbReference>
<dbReference type="PRINTS" id="PR00465">
    <property type="entry name" value="EP450IV"/>
</dbReference>
<dbReference type="PRINTS" id="PR00385">
    <property type="entry name" value="P450"/>
</dbReference>
<dbReference type="SUPFAM" id="SSF48264">
    <property type="entry name" value="Cytochrome P450"/>
    <property type="match status" value="1"/>
</dbReference>
<feature type="chain" id="PRO_0000459619" description="Cytochrome P450 monooxygenase xilC">
    <location>
        <begin position="1"/>
        <end position="572"/>
    </location>
</feature>
<feature type="binding site" description="axial binding residue" evidence="1">
    <location>
        <position position="515"/>
    </location>
    <ligand>
        <name>heme</name>
        <dbReference type="ChEBI" id="CHEBI:30413"/>
    </ligand>
    <ligandPart>
        <name>Fe</name>
        <dbReference type="ChEBI" id="CHEBI:18248"/>
    </ligandPart>
</feature>
<protein>
    <recommendedName>
        <fullName evidence="3">Cytochrome P450 monooxygenase xilC</fullName>
        <ecNumber evidence="2">1.-.-.-</ecNumber>
    </recommendedName>
    <alternativeName>
        <fullName evidence="3">Xylariolide D biosynthesis cluster protein C</fullName>
    </alternativeName>
</protein>
<proteinExistence type="evidence at protein level"/>